<protein>
    <recommendedName>
        <fullName>Fimbrial protein</fullName>
    </recommendedName>
    <alternativeName>
        <fullName>Pilin</fullName>
    </alternativeName>
</protein>
<feature type="propeptide" id="PRO_0000024170" description="Leader sequence" evidence="2">
    <location>
        <begin position="1"/>
        <end position="7"/>
    </location>
</feature>
<feature type="chain" id="PRO_0000024171" description="Fimbrial protein">
    <location>
        <begin position="8"/>
        <end position="157"/>
    </location>
</feature>
<feature type="transmembrane region" description="Helical" evidence="1">
    <location>
        <begin position="8"/>
        <end position="28"/>
    </location>
</feature>
<feature type="modified residue" description="N-methylphenylalanine" evidence="2">
    <location>
        <position position="8"/>
    </location>
</feature>
<feature type="disulfide bond">
    <location>
        <begin position="64"/>
        <end position="100"/>
    </location>
</feature>
<feature type="disulfide bond">
    <location>
        <begin position="136"/>
        <end position="149"/>
    </location>
</feature>
<feature type="helix" evidence="5">
    <location>
        <begin position="36"/>
        <end position="48"/>
    </location>
</feature>
<feature type="helix" evidence="5">
    <location>
        <begin position="51"/>
        <end position="61"/>
    </location>
</feature>
<feature type="strand" evidence="4">
    <location>
        <begin position="71"/>
        <end position="73"/>
    </location>
</feature>
<feature type="helix" evidence="5">
    <location>
        <begin position="77"/>
        <end position="79"/>
    </location>
</feature>
<feature type="strand" evidence="5">
    <location>
        <begin position="83"/>
        <end position="95"/>
    </location>
</feature>
<feature type="strand" evidence="5">
    <location>
        <begin position="98"/>
        <end position="106"/>
    </location>
</feature>
<feature type="strand" evidence="5">
    <location>
        <begin position="108"/>
        <end position="111"/>
    </location>
</feature>
<feature type="helix" evidence="5">
    <location>
        <begin position="113"/>
        <end position="115"/>
    </location>
</feature>
<feature type="strand" evidence="5">
    <location>
        <begin position="119"/>
        <end position="125"/>
    </location>
</feature>
<feature type="turn" evidence="5">
    <location>
        <begin position="127"/>
        <end position="129"/>
    </location>
</feature>
<feature type="strand" evidence="5">
    <location>
        <begin position="133"/>
        <end position="140"/>
    </location>
</feature>
<feature type="helix" evidence="5">
    <location>
        <begin position="142"/>
        <end position="144"/>
    </location>
</feature>
<feature type="helix" evidence="5">
    <location>
        <begin position="147"/>
        <end position="149"/>
    </location>
</feature>
<keyword id="KW-0002">3D-structure</keyword>
<keyword id="KW-1015">Disulfide bond</keyword>
<keyword id="KW-0281">Fimbrium</keyword>
<keyword id="KW-0472">Membrane</keyword>
<keyword id="KW-0488">Methylation</keyword>
<keyword id="KW-0812">Transmembrane</keyword>
<keyword id="KW-1133">Transmembrane helix</keyword>
<name>FMP1_PSEAI</name>
<dbReference type="EMBL" id="M21651">
    <property type="protein sequence ID" value="AAC63062.1"/>
    <property type="molecule type" value="Genomic_DNA"/>
</dbReference>
<dbReference type="PIR" id="A31105">
    <property type="entry name" value="A31105"/>
</dbReference>
<dbReference type="PDB" id="1HPW">
    <property type="method" value="NMR"/>
    <property type="chains" value="A=36-157"/>
</dbReference>
<dbReference type="PDB" id="1QVE">
    <property type="method" value="X-ray"/>
    <property type="resolution" value="1.54 A"/>
    <property type="chains" value="A/B=36-157"/>
</dbReference>
<dbReference type="PDB" id="1RG0">
    <property type="method" value="X-ray"/>
    <property type="resolution" value="1.80 A"/>
    <property type="chains" value="A/B=36-157"/>
</dbReference>
<dbReference type="PDBsum" id="1HPW"/>
<dbReference type="PDBsum" id="1QVE"/>
<dbReference type="PDBsum" id="1RG0"/>
<dbReference type="SMR" id="P17838"/>
<dbReference type="EvolutionaryTrace" id="P17838"/>
<dbReference type="GO" id="GO:0016020">
    <property type="term" value="C:membrane"/>
    <property type="evidence" value="ECO:0007669"/>
    <property type="project" value="UniProtKB-SubCell"/>
</dbReference>
<dbReference type="GO" id="GO:0042597">
    <property type="term" value="C:periplasmic space"/>
    <property type="evidence" value="ECO:0000315"/>
    <property type="project" value="CAFA"/>
</dbReference>
<dbReference type="GO" id="GO:0044096">
    <property type="term" value="C:type IV pilus"/>
    <property type="evidence" value="ECO:0007669"/>
    <property type="project" value="TreeGrafter"/>
</dbReference>
<dbReference type="GO" id="GO:0043208">
    <property type="term" value="F:glycosphingolipid binding"/>
    <property type="evidence" value="ECO:0000315"/>
    <property type="project" value="CAFA"/>
</dbReference>
<dbReference type="GO" id="GO:0051701">
    <property type="term" value="P:biological process involved in interaction with host"/>
    <property type="evidence" value="ECO:0000315"/>
    <property type="project" value="CAFA"/>
</dbReference>
<dbReference type="GO" id="GO:0007155">
    <property type="term" value="P:cell adhesion"/>
    <property type="evidence" value="ECO:0007669"/>
    <property type="project" value="InterPro"/>
</dbReference>
<dbReference type="GO" id="GO:0043107">
    <property type="term" value="P:type IV pilus-dependent motility"/>
    <property type="evidence" value="ECO:0007669"/>
    <property type="project" value="TreeGrafter"/>
</dbReference>
<dbReference type="Gene3D" id="3.30.700.10">
    <property type="entry name" value="Glycoprotein, Type 4 Pilin"/>
    <property type="match status" value="1"/>
</dbReference>
<dbReference type="InterPro" id="IPR012902">
    <property type="entry name" value="N_methyl_site"/>
</dbReference>
<dbReference type="InterPro" id="IPR001082">
    <property type="entry name" value="Pilin"/>
</dbReference>
<dbReference type="InterPro" id="IPR045584">
    <property type="entry name" value="Pilin-like"/>
</dbReference>
<dbReference type="InterPro" id="IPR050470">
    <property type="entry name" value="T4P/T2SS_Core"/>
</dbReference>
<dbReference type="NCBIfam" id="TIGR02532">
    <property type="entry name" value="IV_pilin_GFxxxE"/>
    <property type="match status" value="1"/>
</dbReference>
<dbReference type="PANTHER" id="PTHR30093">
    <property type="entry name" value="GENERAL SECRETION PATHWAY PROTEIN G"/>
    <property type="match status" value="1"/>
</dbReference>
<dbReference type="PANTHER" id="PTHR30093:SF34">
    <property type="entry name" value="PREPILIN PEPTIDASE-DEPENDENT PROTEIN D"/>
    <property type="match status" value="1"/>
</dbReference>
<dbReference type="Pfam" id="PF07963">
    <property type="entry name" value="N_methyl"/>
    <property type="match status" value="1"/>
</dbReference>
<dbReference type="Pfam" id="PF00114">
    <property type="entry name" value="Pilin"/>
    <property type="match status" value="1"/>
</dbReference>
<dbReference type="SUPFAM" id="SSF54523">
    <property type="entry name" value="Pili subunits"/>
    <property type="match status" value="1"/>
</dbReference>
<dbReference type="PROSITE" id="PS00409">
    <property type="entry name" value="PROKAR_NTER_METHYL"/>
    <property type="match status" value="1"/>
</dbReference>
<sequence>MKAAQKGFTLIELMIVVAIIGILAAIAIPAYQDYTARAQLSERMTLASGLKTKVSDIFSQDGSCPANTAATAGIEKDTDINGKYVAKVTTGGTAAASGGCTIVATMKASDVATPLRGKTLTLTLGNADKGSYTWACTSNADNKYLPKTCQTATTTTP</sequence>
<accession>P17838</accession>
<gene>
    <name type="primary">pilA</name>
    <name type="synonym">fimA</name>
</gene>
<proteinExistence type="evidence at protein level"/>
<organism>
    <name type="scientific">Pseudomonas aeruginosa</name>
    <dbReference type="NCBI Taxonomy" id="287"/>
    <lineage>
        <taxon>Bacteria</taxon>
        <taxon>Pseudomonadati</taxon>
        <taxon>Pseudomonadota</taxon>
        <taxon>Gammaproteobacteria</taxon>
        <taxon>Pseudomonadales</taxon>
        <taxon>Pseudomonadaceae</taxon>
        <taxon>Pseudomonas</taxon>
    </lineage>
</organism>
<comment type="subunit">
    <text>The pili are polar flexible filaments of about 5.4 nanometers diameter and 2.5 micrometers average length; they consist of only a single polypeptide chain arranged in a helical configuration of five subunits per turn in the assembled pilus.</text>
</comment>
<comment type="subcellular location">
    <subcellularLocation>
        <location>Fimbrium</location>
    </subcellularLocation>
    <subcellularLocation>
        <location evidence="1">Membrane</location>
        <topology evidence="1">Single-pass membrane protein</topology>
    </subcellularLocation>
</comment>
<comment type="similarity">
    <text evidence="3">Belongs to the N-Me-Phe pilin family.</text>
</comment>
<evidence type="ECO:0000255" key="1"/>
<evidence type="ECO:0000255" key="2">
    <source>
        <dbReference type="PROSITE-ProRule" id="PRU01070"/>
    </source>
</evidence>
<evidence type="ECO:0000305" key="3"/>
<evidence type="ECO:0007829" key="4">
    <source>
        <dbReference type="PDB" id="1HPW"/>
    </source>
</evidence>
<evidence type="ECO:0007829" key="5">
    <source>
        <dbReference type="PDB" id="1QVE"/>
    </source>
</evidence>
<reference key="1">
    <citation type="journal article" date="1988" name="J. Bacteriol.">
        <title>Two unusual pilin sequences from different isolates of Pseudomonas aeruginosa.</title>
        <authorList>
            <person name="Pasloske B.L."/>
            <person name="Sastry P.A."/>
            <person name="Finlay B.B."/>
            <person name="Paranchych W."/>
        </authorList>
    </citation>
    <scope>NUCLEOTIDE SEQUENCE [GENOMIC DNA]</scope>
    <source>
        <strain>K122-4</strain>
    </source>
</reference>
<reference key="2">
    <citation type="journal article" date="2001" name="J. Biol. Chem.">
        <title>Structure of a pilin monomer from Pseudomonas aeruginosa: implications for the assembly of pili.</title>
        <authorList>
            <person name="Keizer D.W."/>
            <person name="Slupsky C.M."/>
            <person name="Kalisiak M."/>
            <person name="Campbell A.P."/>
            <person name="Crump M.P."/>
            <person name="Sastry P.A."/>
            <person name="Hazes B."/>
            <person name="Irvin R.T."/>
            <person name="Sykes B.D."/>
        </authorList>
    </citation>
    <scope>STRUCTURE BY NMR OF 36-157</scope>
</reference>